<reference key="1">
    <citation type="journal article" date="2004" name="Proc. Natl. Acad. Sci. U.S.A.">
        <title>Complete genomes of two clinical Staphylococcus aureus strains: evidence for the rapid evolution of virulence and drug resistance.</title>
        <authorList>
            <person name="Holden M.T.G."/>
            <person name="Feil E.J."/>
            <person name="Lindsay J.A."/>
            <person name="Peacock S.J."/>
            <person name="Day N.P.J."/>
            <person name="Enright M.C."/>
            <person name="Foster T.J."/>
            <person name="Moore C.E."/>
            <person name="Hurst L."/>
            <person name="Atkin R."/>
            <person name="Barron A."/>
            <person name="Bason N."/>
            <person name="Bentley S.D."/>
            <person name="Chillingworth C."/>
            <person name="Chillingworth T."/>
            <person name="Churcher C."/>
            <person name="Clark L."/>
            <person name="Corton C."/>
            <person name="Cronin A."/>
            <person name="Doggett J."/>
            <person name="Dowd L."/>
            <person name="Feltwell T."/>
            <person name="Hance Z."/>
            <person name="Harris B."/>
            <person name="Hauser H."/>
            <person name="Holroyd S."/>
            <person name="Jagels K."/>
            <person name="James K.D."/>
            <person name="Lennard N."/>
            <person name="Line A."/>
            <person name="Mayes R."/>
            <person name="Moule S."/>
            <person name="Mungall K."/>
            <person name="Ormond D."/>
            <person name="Quail M.A."/>
            <person name="Rabbinowitsch E."/>
            <person name="Rutherford K.M."/>
            <person name="Sanders M."/>
            <person name="Sharp S."/>
            <person name="Simmonds M."/>
            <person name="Stevens K."/>
            <person name="Whitehead S."/>
            <person name="Barrell B.G."/>
            <person name="Spratt B.G."/>
            <person name="Parkhill J."/>
        </authorList>
    </citation>
    <scope>NUCLEOTIDE SEQUENCE [LARGE SCALE GENOMIC DNA]</scope>
    <source>
        <strain>MRSA252</strain>
    </source>
</reference>
<keyword id="KW-0963">Cytoplasm</keyword>
<keyword id="KW-0274">FAD</keyword>
<keyword id="KW-0285">Flavoprotein</keyword>
<keyword id="KW-0489">Methyltransferase</keyword>
<keyword id="KW-0520">NAD</keyword>
<keyword id="KW-0521">NADP</keyword>
<keyword id="KW-0808">Transferase</keyword>
<keyword id="KW-0819">tRNA processing</keyword>
<name>TRMFO_STAAR</name>
<proteinExistence type="inferred from homology"/>
<feature type="chain" id="PRO_0000117260" description="Methylenetetrahydrofolate--tRNA-(uracil-5-)-methyltransferase TrmFO">
    <location>
        <begin position="1"/>
        <end position="435"/>
    </location>
</feature>
<feature type="binding site" evidence="1">
    <location>
        <begin position="9"/>
        <end position="14"/>
    </location>
    <ligand>
        <name>FAD</name>
        <dbReference type="ChEBI" id="CHEBI:57692"/>
    </ligand>
</feature>
<gene>
    <name evidence="1" type="primary">trmFO</name>
    <name type="synonym">gid</name>
    <name type="ordered locus">SAR1227</name>
</gene>
<accession>Q6GHI4</accession>
<dbReference type="EC" id="2.1.1.74" evidence="1"/>
<dbReference type="EMBL" id="BX571856">
    <property type="protein sequence ID" value="CAG40229.1"/>
    <property type="molecule type" value="Genomic_DNA"/>
</dbReference>
<dbReference type="RefSeq" id="WP_000195263.1">
    <property type="nucleotide sequence ID" value="NC_002952.2"/>
</dbReference>
<dbReference type="SMR" id="Q6GHI4"/>
<dbReference type="KEGG" id="sar:SAR1227"/>
<dbReference type="HOGENOM" id="CLU_033057_1_0_9"/>
<dbReference type="Proteomes" id="UP000000596">
    <property type="component" value="Chromosome"/>
</dbReference>
<dbReference type="GO" id="GO:0005829">
    <property type="term" value="C:cytosol"/>
    <property type="evidence" value="ECO:0007669"/>
    <property type="project" value="TreeGrafter"/>
</dbReference>
<dbReference type="GO" id="GO:0050660">
    <property type="term" value="F:flavin adenine dinucleotide binding"/>
    <property type="evidence" value="ECO:0007669"/>
    <property type="project" value="UniProtKB-UniRule"/>
</dbReference>
<dbReference type="GO" id="GO:0047151">
    <property type="term" value="F:tRNA (uracil(54)-C5)-methyltransferase activity, 5,10-methylenetetrahydrofolate-dependent"/>
    <property type="evidence" value="ECO:0007669"/>
    <property type="project" value="UniProtKB-UniRule"/>
</dbReference>
<dbReference type="GO" id="GO:0030488">
    <property type="term" value="P:tRNA methylation"/>
    <property type="evidence" value="ECO:0007669"/>
    <property type="project" value="TreeGrafter"/>
</dbReference>
<dbReference type="GO" id="GO:0002098">
    <property type="term" value="P:tRNA wobble uridine modification"/>
    <property type="evidence" value="ECO:0007669"/>
    <property type="project" value="TreeGrafter"/>
</dbReference>
<dbReference type="FunFam" id="3.50.50.60:FF:000035">
    <property type="entry name" value="Methylenetetrahydrofolate--tRNA-(uracil-5-)-methyltransferase TrmFO"/>
    <property type="match status" value="1"/>
</dbReference>
<dbReference type="FunFam" id="3.50.50.60:FF:000040">
    <property type="entry name" value="Methylenetetrahydrofolate--tRNA-(uracil-5-)-methyltransferase TrmFO"/>
    <property type="match status" value="1"/>
</dbReference>
<dbReference type="Gene3D" id="3.50.50.60">
    <property type="entry name" value="FAD/NAD(P)-binding domain"/>
    <property type="match status" value="2"/>
</dbReference>
<dbReference type="HAMAP" id="MF_01037">
    <property type="entry name" value="TrmFO"/>
    <property type="match status" value="1"/>
</dbReference>
<dbReference type="InterPro" id="IPR036188">
    <property type="entry name" value="FAD/NAD-bd_sf"/>
</dbReference>
<dbReference type="InterPro" id="IPR002218">
    <property type="entry name" value="MnmG-rel"/>
</dbReference>
<dbReference type="InterPro" id="IPR020595">
    <property type="entry name" value="MnmG-rel_CS"/>
</dbReference>
<dbReference type="InterPro" id="IPR040131">
    <property type="entry name" value="MnmG_N"/>
</dbReference>
<dbReference type="InterPro" id="IPR004417">
    <property type="entry name" value="TrmFO"/>
</dbReference>
<dbReference type="NCBIfam" id="TIGR00137">
    <property type="entry name" value="gid_trmFO"/>
    <property type="match status" value="1"/>
</dbReference>
<dbReference type="NCBIfam" id="NF003739">
    <property type="entry name" value="PRK05335.1"/>
    <property type="match status" value="1"/>
</dbReference>
<dbReference type="PANTHER" id="PTHR11806">
    <property type="entry name" value="GLUCOSE INHIBITED DIVISION PROTEIN A"/>
    <property type="match status" value="1"/>
</dbReference>
<dbReference type="PANTHER" id="PTHR11806:SF2">
    <property type="entry name" value="METHYLENETETRAHYDROFOLATE--TRNA-(URACIL-5-)-METHYLTRANSFERASE TRMFO"/>
    <property type="match status" value="1"/>
</dbReference>
<dbReference type="Pfam" id="PF01134">
    <property type="entry name" value="GIDA"/>
    <property type="match status" value="1"/>
</dbReference>
<dbReference type="SUPFAM" id="SSF51905">
    <property type="entry name" value="FAD/NAD(P)-binding domain"/>
    <property type="match status" value="1"/>
</dbReference>
<dbReference type="PROSITE" id="PS01281">
    <property type="entry name" value="GIDA_2"/>
    <property type="match status" value="1"/>
</dbReference>
<protein>
    <recommendedName>
        <fullName evidence="1">Methylenetetrahydrofolate--tRNA-(uracil-5-)-methyltransferase TrmFO</fullName>
        <ecNumber evidence="1">2.1.1.74</ecNumber>
    </recommendedName>
    <alternativeName>
        <fullName evidence="1">Folate-dependent tRNA (uracil-5-)-methyltransferase</fullName>
    </alternativeName>
    <alternativeName>
        <fullName evidence="1">Folate-dependent tRNA(M-5-U54)-methyltransferase</fullName>
    </alternativeName>
</protein>
<comment type="function">
    <text evidence="1">Catalyzes the folate-dependent formation of 5-methyl-uridine at position 54 (M-5-U54) in all tRNAs.</text>
</comment>
<comment type="catalytic activity">
    <reaction evidence="1">
        <text>uridine(54) in tRNA + (6R)-5,10-methylene-5,6,7,8-tetrahydrofolate + NADH + H(+) = 5-methyluridine(54) in tRNA + (6S)-5,6,7,8-tetrahydrofolate + NAD(+)</text>
        <dbReference type="Rhea" id="RHEA:16873"/>
        <dbReference type="Rhea" id="RHEA-COMP:10167"/>
        <dbReference type="Rhea" id="RHEA-COMP:10193"/>
        <dbReference type="ChEBI" id="CHEBI:15378"/>
        <dbReference type="ChEBI" id="CHEBI:15636"/>
        <dbReference type="ChEBI" id="CHEBI:57453"/>
        <dbReference type="ChEBI" id="CHEBI:57540"/>
        <dbReference type="ChEBI" id="CHEBI:57945"/>
        <dbReference type="ChEBI" id="CHEBI:65315"/>
        <dbReference type="ChEBI" id="CHEBI:74447"/>
        <dbReference type="EC" id="2.1.1.74"/>
    </reaction>
</comment>
<comment type="catalytic activity">
    <reaction evidence="1">
        <text>uridine(54) in tRNA + (6R)-5,10-methylene-5,6,7,8-tetrahydrofolate + NADPH + H(+) = 5-methyluridine(54) in tRNA + (6S)-5,6,7,8-tetrahydrofolate + NADP(+)</text>
        <dbReference type="Rhea" id="RHEA:62372"/>
        <dbReference type="Rhea" id="RHEA-COMP:10167"/>
        <dbReference type="Rhea" id="RHEA-COMP:10193"/>
        <dbReference type="ChEBI" id="CHEBI:15378"/>
        <dbReference type="ChEBI" id="CHEBI:15636"/>
        <dbReference type="ChEBI" id="CHEBI:57453"/>
        <dbReference type="ChEBI" id="CHEBI:57783"/>
        <dbReference type="ChEBI" id="CHEBI:58349"/>
        <dbReference type="ChEBI" id="CHEBI:65315"/>
        <dbReference type="ChEBI" id="CHEBI:74447"/>
        <dbReference type="EC" id="2.1.1.74"/>
    </reaction>
</comment>
<comment type="cofactor">
    <cofactor evidence="1">
        <name>FAD</name>
        <dbReference type="ChEBI" id="CHEBI:57692"/>
    </cofactor>
</comment>
<comment type="subcellular location">
    <subcellularLocation>
        <location evidence="1">Cytoplasm</location>
    </subcellularLocation>
</comment>
<comment type="similarity">
    <text evidence="1">Belongs to the MnmG family. TrmFO subfamily.</text>
</comment>
<organism>
    <name type="scientific">Staphylococcus aureus (strain MRSA252)</name>
    <dbReference type="NCBI Taxonomy" id="282458"/>
    <lineage>
        <taxon>Bacteria</taxon>
        <taxon>Bacillati</taxon>
        <taxon>Bacillota</taxon>
        <taxon>Bacilli</taxon>
        <taxon>Bacillales</taxon>
        <taxon>Staphylococcaceae</taxon>
        <taxon>Staphylococcus</taxon>
    </lineage>
</organism>
<sequence length="435" mass="48359">MTQTVNVIGAGLAGSEAAYQLSERGIKVNLIEMRPVKQTPAHHTDKFAELVCSNSLRGNALTNGVGVLKEEMRRLNSIIIEAADKARVPAGGALAVDRHDFSGYITETLKNHENITVINEEINAIPDGYTIIATGPLTTETLAQEIVDITGKDQLYFYDAAAPIIEKESIDMDKVYLKSRYDKGEAAYLNCPMTEDEFNRFYDAVLEAEAAPVNSFEKEKYFEGCMPFEVMAERGRKTLLFGPMKPVGLEDPKTGKRPYAVVQLRQDDAAGTLYNIVGFQTHLKWGAQKEVIKLIPGLENVDIVRYGVMHRNTFINSPDVLNEKYELISQPNIQFAGQMTGVEGYVESAASGLVAGINLAHKILGKGEVVFPRETMIGSMAYYISHAKNNKNFQPMNANFGLLPSLETRIKDKKERYEAQANRALDYLENFKKTL</sequence>
<evidence type="ECO:0000255" key="1">
    <source>
        <dbReference type="HAMAP-Rule" id="MF_01037"/>
    </source>
</evidence>